<reference key="1">
    <citation type="journal article" date="2003" name="Science">
        <title>Genome of Geobacter sulfurreducens: metal reduction in subsurface environments.</title>
        <authorList>
            <person name="Methe B.A."/>
            <person name="Nelson K.E."/>
            <person name="Eisen J.A."/>
            <person name="Paulsen I.T."/>
            <person name="Nelson W.C."/>
            <person name="Heidelberg J.F."/>
            <person name="Wu D."/>
            <person name="Wu M."/>
            <person name="Ward N.L."/>
            <person name="Beanan M.J."/>
            <person name="Dodson R.J."/>
            <person name="Madupu R."/>
            <person name="Brinkac L.M."/>
            <person name="Daugherty S.C."/>
            <person name="DeBoy R.T."/>
            <person name="Durkin A.S."/>
            <person name="Gwinn M.L."/>
            <person name="Kolonay J.F."/>
            <person name="Sullivan S.A."/>
            <person name="Haft D.H."/>
            <person name="Selengut J."/>
            <person name="Davidsen T.M."/>
            <person name="Zafar N."/>
            <person name="White O."/>
            <person name="Tran B."/>
            <person name="Romero C."/>
            <person name="Forberger H.A."/>
            <person name="Weidman J.F."/>
            <person name="Khouri H.M."/>
            <person name="Feldblyum T.V."/>
            <person name="Utterback T.R."/>
            <person name="Van Aken S.E."/>
            <person name="Lovley D.R."/>
            <person name="Fraser C.M."/>
        </authorList>
    </citation>
    <scope>NUCLEOTIDE SEQUENCE [LARGE SCALE GENOMIC DNA]</scope>
    <source>
        <strain>ATCC 51573 / DSM 12127 / PCA</strain>
    </source>
</reference>
<evidence type="ECO:0000255" key="1">
    <source>
        <dbReference type="HAMAP-Rule" id="MF_00093"/>
    </source>
</evidence>
<protein>
    <recommendedName>
        <fullName evidence="1">Peptide chain release factor 1</fullName>
        <shortName evidence="1">RF-1</shortName>
    </recommendedName>
</protein>
<organism>
    <name type="scientific">Geobacter sulfurreducens (strain ATCC 51573 / DSM 12127 / PCA)</name>
    <dbReference type="NCBI Taxonomy" id="243231"/>
    <lineage>
        <taxon>Bacteria</taxon>
        <taxon>Pseudomonadati</taxon>
        <taxon>Thermodesulfobacteriota</taxon>
        <taxon>Desulfuromonadia</taxon>
        <taxon>Geobacterales</taxon>
        <taxon>Geobacteraceae</taxon>
        <taxon>Geobacter</taxon>
    </lineage>
</organism>
<gene>
    <name evidence="1" type="primary">prfA</name>
    <name type="ordered locus">GSU3104</name>
</gene>
<proteinExistence type="inferred from homology"/>
<comment type="function">
    <text evidence="1">Peptide chain release factor 1 directs the termination of translation in response to the peptide chain termination codons UAG and UAA.</text>
</comment>
<comment type="subcellular location">
    <subcellularLocation>
        <location evidence="1">Cytoplasm</location>
    </subcellularLocation>
</comment>
<comment type="PTM">
    <text evidence="1">Methylated by PrmC. Methylation increases the termination efficiency of RF1.</text>
</comment>
<comment type="similarity">
    <text evidence="1">Belongs to the prokaryotic/mitochondrial release factor family.</text>
</comment>
<dbReference type="EMBL" id="AE017180">
    <property type="protein sequence ID" value="AAR36495.1"/>
    <property type="molecule type" value="Genomic_DNA"/>
</dbReference>
<dbReference type="RefSeq" id="NP_954145.1">
    <property type="nucleotide sequence ID" value="NC_002939.5"/>
</dbReference>
<dbReference type="RefSeq" id="WP_010943725.1">
    <property type="nucleotide sequence ID" value="NC_002939.5"/>
</dbReference>
<dbReference type="SMR" id="Q748B1"/>
<dbReference type="FunCoup" id="Q748B1">
    <property type="interactions" value="484"/>
</dbReference>
<dbReference type="STRING" id="243231.GSU3104"/>
<dbReference type="EnsemblBacteria" id="AAR36495">
    <property type="protein sequence ID" value="AAR36495"/>
    <property type="gene ID" value="GSU3104"/>
</dbReference>
<dbReference type="KEGG" id="gsu:GSU3104"/>
<dbReference type="PATRIC" id="fig|243231.5.peg.3128"/>
<dbReference type="eggNOG" id="COG0216">
    <property type="taxonomic scope" value="Bacteria"/>
</dbReference>
<dbReference type="HOGENOM" id="CLU_036856_0_1_7"/>
<dbReference type="InParanoid" id="Q748B1"/>
<dbReference type="OrthoDB" id="9806673at2"/>
<dbReference type="Proteomes" id="UP000000577">
    <property type="component" value="Chromosome"/>
</dbReference>
<dbReference type="GO" id="GO:0005737">
    <property type="term" value="C:cytoplasm"/>
    <property type="evidence" value="ECO:0007669"/>
    <property type="project" value="UniProtKB-SubCell"/>
</dbReference>
<dbReference type="GO" id="GO:0016149">
    <property type="term" value="F:translation release factor activity, codon specific"/>
    <property type="evidence" value="ECO:0007669"/>
    <property type="project" value="UniProtKB-UniRule"/>
</dbReference>
<dbReference type="FunFam" id="3.30.160.20:FF:000004">
    <property type="entry name" value="Peptide chain release factor 1"/>
    <property type="match status" value="1"/>
</dbReference>
<dbReference type="FunFam" id="3.30.70.1660:FF:000002">
    <property type="entry name" value="Peptide chain release factor 1"/>
    <property type="match status" value="1"/>
</dbReference>
<dbReference type="FunFam" id="3.30.70.1660:FF:000004">
    <property type="entry name" value="Peptide chain release factor 1"/>
    <property type="match status" value="1"/>
</dbReference>
<dbReference type="Gene3D" id="3.30.160.20">
    <property type="match status" value="1"/>
</dbReference>
<dbReference type="Gene3D" id="3.30.70.1660">
    <property type="match status" value="1"/>
</dbReference>
<dbReference type="Gene3D" id="6.10.140.1950">
    <property type="match status" value="1"/>
</dbReference>
<dbReference type="HAMAP" id="MF_00093">
    <property type="entry name" value="Rel_fac_1"/>
    <property type="match status" value="1"/>
</dbReference>
<dbReference type="InterPro" id="IPR005139">
    <property type="entry name" value="PCRF"/>
</dbReference>
<dbReference type="InterPro" id="IPR000352">
    <property type="entry name" value="Pep_chain_release_fac_I"/>
</dbReference>
<dbReference type="InterPro" id="IPR045853">
    <property type="entry name" value="Pep_chain_release_fac_I_sf"/>
</dbReference>
<dbReference type="InterPro" id="IPR050057">
    <property type="entry name" value="Prokaryotic/Mito_RF"/>
</dbReference>
<dbReference type="InterPro" id="IPR004373">
    <property type="entry name" value="RF-1"/>
</dbReference>
<dbReference type="NCBIfam" id="TIGR00019">
    <property type="entry name" value="prfA"/>
    <property type="match status" value="1"/>
</dbReference>
<dbReference type="NCBIfam" id="NF001859">
    <property type="entry name" value="PRK00591.1"/>
    <property type="match status" value="1"/>
</dbReference>
<dbReference type="PANTHER" id="PTHR43804">
    <property type="entry name" value="LD18447P"/>
    <property type="match status" value="1"/>
</dbReference>
<dbReference type="PANTHER" id="PTHR43804:SF7">
    <property type="entry name" value="LD18447P"/>
    <property type="match status" value="1"/>
</dbReference>
<dbReference type="Pfam" id="PF03462">
    <property type="entry name" value="PCRF"/>
    <property type="match status" value="1"/>
</dbReference>
<dbReference type="Pfam" id="PF00472">
    <property type="entry name" value="RF-1"/>
    <property type="match status" value="1"/>
</dbReference>
<dbReference type="SMART" id="SM00937">
    <property type="entry name" value="PCRF"/>
    <property type="match status" value="1"/>
</dbReference>
<dbReference type="SUPFAM" id="SSF75620">
    <property type="entry name" value="Release factor"/>
    <property type="match status" value="1"/>
</dbReference>
<dbReference type="PROSITE" id="PS00745">
    <property type="entry name" value="RF_PROK_I"/>
    <property type="match status" value="1"/>
</dbReference>
<feature type="chain" id="PRO_0000177676" description="Peptide chain release factor 1">
    <location>
        <begin position="1"/>
        <end position="355"/>
    </location>
</feature>
<feature type="modified residue" description="N5-methylglutamine" evidence="1">
    <location>
        <position position="230"/>
    </location>
</feature>
<sequence length="355" mass="40282">MFEKIEELEVRYHELESLLADPAVLGNQPEFRRLSREHNDLTPLIESYRTYKKVLEEMEGNRELLADPEMKEMAQAELEELEQRQEELEGEIKLLLLPRDPNDDRNVILEIRAGTGGDESALFAGDLFRMYSRFAERNRWKVEVMSASESERGGFKEIVALIEGQGVFAKLKYESGTHRVQRVPETEAQGRIHTSACTVAVLPEAEDIEVDINPADLKIDVYRASGAGGQHVNKTESAVRITHIPTGIVVECQDERSQIKNRAKAMKVLKTKILDGLHQEQNARIAADRKQQVGSGDRSERIRTYNFPQGRMTDHRIGLTLYRLDSLMEGDIAEVVDALRTHYQMEALKAQAEAA</sequence>
<accession>Q748B1</accession>
<keyword id="KW-0963">Cytoplasm</keyword>
<keyword id="KW-0488">Methylation</keyword>
<keyword id="KW-0648">Protein biosynthesis</keyword>
<keyword id="KW-1185">Reference proteome</keyword>
<name>RF1_GEOSL</name>